<proteinExistence type="evidence at protein level"/>
<feature type="chain" id="PRO_0000180305" description="Conidial yellow pigment biosynthesis polyketide synthase">
    <location>
        <begin position="1"/>
        <end position="2157"/>
    </location>
</feature>
<feature type="domain" description="Ketosynthase family 3 (KS3)" evidence="4 13">
    <location>
        <begin position="376"/>
        <end position="807"/>
    </location>
</feature>
<feature type="domain" description="PKS/mFAS DH" evidence="5">
    <location>
        <begin position="1294"/>
        <end position="1598"/>
    </location>
</feature>
<feature type="domain" description="Carrier 1" evidence="3">
    <location>
        <begin position="1645"/>
        <end position="1722"/>
    </location>
</feature>
<feature type="domain" description="Carrier 2" evidence="3">
    <location>
        <begin position="1767"/>
        <end position="1844"/>
    </location>
</feature>
<feature type="region of interest" description="N-terminal acylcarrier protein transacylase domain (SAT)" evidence="2 13">
    <location>
        <begin position="8"/>
        <end position="244"/>
    </location>
</feature>
<feature type="region of interest" description="Malonyl-CoA:ACP transacylase (MAT) domain" evidence="2 13">
    <location>
        <begin position="912"/>
        <end position="1232"/>
    </location>
</feature>
<feature type="region of interest" description="Product template (PT) domain" evidence="2">
    <location>
        <begin position="1290"/>
        <end position="1603"/>
    </location>
</feature>
<feature type="region of interest" description="N-terminal hotdog fold" evidence="5">
    <location>
        <begin position="1294"/>
        <end position="1425"/>
    </location>
</feature>
<feature type="region of interest" description="C-terminal hotdog fold" evidence="5">
    <location>
        <begin position="1453"/>
        <end position="1598"/>
    </location>
</feature>
<feature type="region of interest" description="Disordered" evidence="7">
    <location>
        <begin position="1607"/>
        <end position="1638"/>
    </location>
</feature>
<feature type="region of interest" description="Disordered" evidence="7">
    <location>
        <begin position="1725"/>
        <end position="1760"/>
    </location>
</feature>
<feature type="region of interest" description="Disordered" evidence="7">
    <location>
        <begin position="1847"/>
        <end position="1888"/>
    </location>
</feature>
<feature type="region of interest" description="Claisen cyclase domain" evidence="8">
    <location>
        <begin position="1877"/>
        <end position="2149"/>
    </location>
</feature>
<feature type="compositionally biased region" description="Polar residues" evidence="7">
    <location>
        <begin position="1608"/>
        <end position="1619"/>
    </location>
</feature>
<feature type="compositionally biased region" description="Polar residues" evidence="7">
    <location>
        <begin position="1741"/>
        <end position="1759"/>
    </location>
</feature>
<feature type="compositionally biased region" description="Polar residues" evidence="7">
    <location>
        <begin position="1851"/>
        <end position="1878"/>
    </location>
</feature>
<feature type="active site" description="For beta-ketoacyl synthase activity" evidence="4">
    <location>
        <position position="548"/>
    </location>
</feature>
<feature type="active site" description="For beta-ketoacyl synthase activity" evidence="4">
    <location>
        <position position="683"/>
    </location>
</feature>
<feature type="active site" description="For beta-ketoacyl synthase activity" evidence="4">
    <location>
        <position position="725"/>
    </location>
</feature>
<feature type="active site" description="For acyl/malonyl transferase activity" evidence="6">
    <location>
        <position position="1001"/>
    </location>
</feature>
<feature type="active site" description="Proton acceptor; for dehydratase activity" evidence="5">
    <location>
        <position position="1326"/>
    </location>
</feature>
<feature type="active site" description="Proton donor; for dehydratase activity" evidence="5">
    <location>
        <position position="1511"/>
    </location>
</feature>
<feature type="active site" description="For thioesterase activity" evidence="8">
    <location>
        <position position="1967"/>
    </location>
</feature>
<feature type="modified residue" description="O-(pantetheine 4'-phosphoryl)serine" evidence="3">
    <location>
        <position position="1682"/>
    </location>
</feature>
<feature type="modified residue" description="O-(pantetheine 4'-phosphoryl)serine" evidence="3">
    <location>
        <position position="1804"/>
    </location>
</feature>
<feature type="mutagenesis site" description="Fails to form the naphthopyrene YWA1; when associated with A-1804." evidence="8">
    <original>S</original>
    <variation>A</variation>
    <location>
        <position position="1682"/>
    </location>
</feature>
<feature type="mutagenesis site" description="Forms the naphthopyrene YWA1." evidence="8">
    <original>S</original>
    <variation>C</variation>
    <variation>A</variation>
    <location>
        <position position="1682"/>
    </location>
</feature>
<feature type="mutagenesis site" description="Fails to form the naphthopyrene YWA1; when associated with C-1804." evidence="8">
    <original>S</original>
    <variation>C</variation>
    <location>
        <position position="1682"/>
    </location>
</feature>
<feature type="mutagenesis site" description="Fails to form the naphthopyrene YWA1; when associated with A-1682." evidence="8">
    <original>S</original>
    <variation>A</variation>
    <location>
        <position position="1804"/>
    </location>
</feature>
<feature type="mutagenesis site" description="Forms the naphthopyrene YWA1." evidence="8">
    <original>S</original>
    <variation>C</variation>
    <variation>A</variation>
    <location>
        <position position="1804"/>
    </location>
</feature>
<feature type="mutagenesis site" description="Fails to form the naphthopyrene YWA1; when associated with C-1682." evidence="8">
    <original>S</original>
    <variation>C</variation>
    <location>
        <position position="1804"/>
    </location>
</feature>
<feature type="mutagenesis site" description="Required for Claisen-type cyclization of the final product." evidence="8">
    <original>S</original>
    <variation>A</variation>
    <location>
        <position position="1967"/>
    </location>
</feature>
<feature type="mutagenesis site" description="Required for Claisen-type cyclization of the final product." evidence="8">
    <original>H</original>
    <variation>Q</variation>
    <location>
        <position position="2129"/>
    </location>
</feature>
<sequence>MEDPYRVYLFGDQTGDFEVGLRRLLQAKNHSLLSSFLQRSYHAVRQEISHLPPSERSTFPRFTSIGDLLARHCESPGNPAIESVLTCIYQLGCFINYYGDLGHTFPSHSQSQLVGLCTGLLSCAAVSCASNIGELLKPAVEVVVVALRLGLCVYRVRKLFGQDQAAPLSWSALVSGLSESEGTSLIDKFTRRNVIPPSSRPYISAVCANTLTISGPPVVLNQFLDTFISGKNKAVMVPIHGPFHASHLYEKRDVEWILKSCNVETIRNHKPRIPVLSSNTGELIVVENMEGFLKIALEEILLRQMSWDKVTDSCISILKSVGDNKPKKLLPISSTATQSLFNSLKKSNLVNIEVDGGISDFAAETQLVNQTGRAELSKIAIIGMSGRFPEADSPQDFWNLLYKGLDVHRKVPEDRWDADAHVDLTGTATNTSKVPYGCWIREPGLFDPRFFNMSPREALQADPAQRLALLTAYEALEGAGFVPDSTPSTQRDRVGIFYGMTSDDYREVNSGQDIDTYFIPGGNRAFTPGRINYYFKFSGPSVSVDTACSSSLAAIHLACNSIWRNDCDTAITGGVNILTNPDNHAGLDRGHFLSRTGNCNTFDDGADGYCRADGVGTVVLKRLEDALADNDPILGVINGAYTNHSAEAVSITRPHVGAQAFIFKKLLNEANVDPKNISYIEMHGTGTQAGDAVEMQSVLDVFAPDHRRGPGQSLHLGSAKSNIGHGESASGVTSLVKVLLMMKENMIPPHCGIKTKINHNFPTDLAQRNVHIALQPTAWNRPSFGKRQIFLNNFSAAGGNTALLLEDGPVSDPEGEDKRRTHVITLSARSQTALQNNIDALCQYISEQEKTFGVKDSNALPSLAYTTTARRIHHPFRVTAIGSSFQEMRDSLIASSRKEFVAVPAKTPGIGFLFTGQGAQYAAMGKQLYEDCSHFRSAIEHLDCISQGQDLPSILPLVDGSLPLSELSPVVVQLGTTCVQMALSSFWASLGITPSFVLGHSLGDFAAMNAAGVLSTSDTIYACGRRAQLLTERCQPGTHAMLAIKAPLVEVKQLLNEKVHDMACINSPSETVISGPKSSIDELSRACSEKGLKSTILTVPYAFHSAQVEPILEDLEKALQGITFNKPSVPFVSALLGEVITEAGSNILNAEYLVRHCRETVNFLSAFEAVRNAKLGGDQTLWLEVGPHTVCSGMVKATLGPQTTTMASLRRDEDTWKVLSNSLSSLYLAGVDINWKQYHQDFSSSHRVLPLPTYKWDLKNYWIPYRNNFCLTKGSSMSAASASLQPTFLTTSAQRVVESRDDGLTATVVVHNDIADPDLNRVIQGHKVNGAALCPSSLYADSAQTLAEYLIEKYKPELKGSGLDVCNVTVPKPLIAKTGKEQFRISATANWVDKHVSVQVFSVTAEGKKLIDHAHCEVKLFDCMAADLEWKRGSYLVKRSIELLENSAVKGDAHRLRRGMVYKLFSALVDYDENYQSIREVILDSEHHEATALVKFQAPQANFHRNPYWIDSFGHLSGFIMNASDGTDSKSQVFVNHGWDSMRCLKKFSADVTYRTYVRMQPWRDSIWAGNVYIFEGDDIIAVFGGVKFQALSRKILDIALPPAGLSKAQTSPIQSSAPQKPIETAKPTSRPAPPVTMKSFVKKSAGPSVVVRALNILASEVGLSESDMSDDLVFADYGVDSLLSLTVTGKYREELNLDMDSSVFIEHPTVGDFKRFVTQLSPSVASDSSSTDRESEYSFNGDSCSGLSSPASPGTVSPPNEKVIQIHENGTMKEIRAIIADEIGVSADEIKSDENLNELGMDSLLSLTVLGKIRESLDMDLPGEFFIENQTLDQIETALDLKPKAVPTAVPQSQPITLPQSQSTKQLSTRPTSSSDNHPPATSILLQGNPRTASKTLFLFPDGSGSATSYATIPGVSPNVAVYGLNCPYMKAPEKLTCSLDSLTTPYLAEIRRRQPTGPYNLGGWSAGGICAYDAARKLVLQQGEIVETLLLLDTPFPIGLEKLPPRLYSFFNSIGLFGEGKAAPPAWLLPHFLAFIDSLDAYKAVPLPFNEQEWKGKLPKTYLVWAKDGVCPKPGDPWPEPAEDGSKDPREMVWLLSNRTDLGPNGWDTLVGKENIGGITVIHDANHFTMTKGEKAKELATFMKNALGVCERRLV</sequence>
<reference key="1">
    <citation type="journal article" date="1992" name="Mol. Gen. Genet.">
        <title>The developmentally regulated Aspergillus nidulans wA gene encodes a polypeptide homologous to polyketide and fatty acid synthases.</title>
        <authorList>
            <person name="Mayorga M.E."/>
            <person name="Timberlake W.E."/>
        </authorList>
    </citation>
    <scope>NUCLEOTIDE SEQUENCE [GENOMIC DNA]</scope>
    <scope>FUNCTION</scope>
    <source>
        <strain>FGSC A4 / ATCC 38163 / CBS 112.46 / NRRL 194 / M139</strain>
    </source>
</reference>
<reference key="2">
    <citation type="journal article" date="1999" name="Tetrahedron Lett.">
        <title>Re-identification of Aspergillus nidulans wA gene to code for a polyketide synthase of naphthopyrone.</title>
        <authorList>
            <person name="Watanabe A."/>
            <person name="Fujii I."/>
            <person name="Sankawa U."/>
            <person name="Mayorga M.E."/>
            <person name="Timberlake W.E."/>
            <person name="Ebizuka Y."/>
        </authorList>
    </citation>
    <scope>SEQUENCE REVISION TO C-TERMINUS</scope>
    <scope>FUNCTION</scope>
    <source>
        <strain>FGSC A4 / ATCC 38163 / CBS 112.46 / NRRL 194 / M139</strain>
    </source>
</reference>
<reference key="3">
    <citation type="journal article" date="2005" name="Nature">
        <title>Sequencing of Aspergillus nidulans and comparative analysis with A. fumigatus and A. oryzae.</title>
        <authorList>
            <person name="Galagan J.E."/>
            <person name="Calvo S.E."/>
            <person name="Cuomo C."/>
            <person name="Ma L.-J."/>
            <person name="Wortman J.R."/>
            <person name="Batzoglou S."/>
            <person name="Lee S.-I."/>
            <person name="Bastuerkmen M."/>
            <person name="Spevak C.C."/>
            <person name="Clutterbuck J."/>
            <person name="Kapitonov V."/>
            <person name="Jurka J."/>
            <person name="Scazzocchio C."/>
            <person name="Farman M.L."/>
            <person name="Butler J."/>
            <person name="Purcell S."/>
            <person name="Harris S."/>
            <person name="Braus G.H."/>
            <person name="Draht O."/>
            <person name="Busch S."/>
            <person name="D'Enfert C."/>
            <person name="Bouchier C."/>
            <person name="Goldman G.H."/>
            <person name="Bell-Pedersen D."/>
            <person name="Griffiths-Jones S."/>
            <person name="Doonan J.H."/>
            <person name="Yu J."/>
            <person name="Vienken K."/>
            <person name="Pain A."/>
            <person name="Freitag M."/>
            <person name="Selker E.U."/>
            <person name="Archer D.B."/>
            <person name="Penalva M.A."/>
            <person name="Oakley B.R."/>
            <person name="Momany M."/>
            <person name="Tanaka T."/>
            <person name="Kumagai T."/>
            <person name="Asai K."/>
            <person name="Machida M."/>
            <person name="Nierman W.C."/>
            <person name="Denning D.W."/>
            <person name="Caddick M.X."/>
            <person name="Hynes M."/>
            <person name="Paoletti M."/>
            <person name="Fischer R."/>
            <person name="Miller B.L."/>
            <person name="Dyer P.S."/>
            <person name="Sachs M.S."/>
            <person name="Osmani S.A."/>
            <person name="Birren B.W."/>
        </authorList>
    </citation>
    <scope>NUCLEOTIDE SEQUENCE [LARGE SCALE GENOMIC DNA]</scope>
    <source>
        <strain>FGSC A4 / ATCC 38163 / CBS 112.46 / NRRL 194 / M139</strain>
    </source>
</reference>
<reference key="4">
    <citation type="journal article" date="2009" name="Fungal Genet. Biol.">
        <title>The 2008 update of the Aspergillus nidulans genome annotation: a community effort.</title>
        <authorList>
            <person name="Wortman J.R."/>
            <person name="Gilsenan J.M."/>
            <person name="Joardar V."/>
            <person name="Deegan J."/>
            <person name="Clutterbuck J."/>
            <person name="Andersen M.R."/>
            <person name="Archer D."/>
            <person name="Bencina M."/>
            <person name="Braus G."/>
            <person name="Coutinho P."/>
            <person name="von Dohren H."/>
            <person name="Doonan J."/>
            <person name="Driessen A.J."/>
            <person name="Durek P."/>
            <person name="Espeso E."/>
            <person name="Fekete E."/>
            <person name="Flipphi M."/>
            <person name="Estrada C.G."/>
            <person name="Geysens S."/>
            <person name="Goldman G."/>
            <person name="de Groot P.W."/>
            <person name="Hansen K."/>
            <person name="Harris S.D."/>
            <person name="Heinekamp T."/>
            <person name="Helmstaedt K."/>
            <person name="Henrissat B."/>
            <person name="Hofmann G."/>
            <person name="Homan T."/>
            <person name="Horio T."/>
            <person name="Horiuchi H."/>
            <person name="James S."/>
            <person name="Jones M."/>
            <person name="Karaffa L."/>
            <person name="Karanyi Z."/>
            <person name="Kato M."/>
            <person name="Keller N."/>
            <person name="Kelly D.E."/>
            <person name="Kiel J.A."/>
            <person name="Kim J.M."/>
            <person name="van der Klei I.J."/>
            <person name="Klis F.M."/>
            <person name="Kovalchuk A."/>
            <person name="Krasevec N."/>
            <person name="Kubicek C.P."/>
            <person name="Liu B."/>
            <person name="Maccabe A."/>
            <person name="Meyer V."/>
            <person name="Mirabito P."/>
            <person name="Miskei M."/>
            <person name="Mos M."/>
            <person name="Mullins J."/>
            <person name="Nelson D.R."/>
            <person name="Nielsen J."/>
            <person name="Oakley B.R."/>
            <person name="Osmani S.A."/>
            <person name="Pakula T."/>
            <person name="Paszewski A."/>
            <person name="Paulsen I."/>
            <person name="Pilsyk S."/>
            <person name="Pocsi I."/>
            <person name="Punt P.J."/>
            <person name="Ram A.F."/>
            <person name="Ren Q."/>
            <person name="Robellet X."/>
            <person name="Robson G."/>
            <person name="Seiboth B."/>
            <person name="van Solingen P."/>
            <person name="Specht T."/>
            <person name="Sun J."/>
            <person name="Taheri-Talesh N."/>
            <person name="Takeshita N."/>
            <person name="Ussery D."/>
            <person name="vanKuyk P.A."/>
            <person name="Visser H."/>
            <person name="van de Vondervoort P.J."/>
            <person name="de Vries R.P."/>
            <person name="Walton J."/>
            <person name="Xiang X."/>
            <person name="Xiong Y."/>
            <person name="Zeng A.P."/>
            <person name="Brandt B.W."/>
            <person name="Cornell M.J."/>
            <person name="van den Hondel C.A."/>
            <person name="Visser J."/>
            <person name="Oliver S.G."/>
            <person name="Turner G."/>
        </authorList>
    </citation>
    <scope>GENOME REANNOTATION</scope>
    <source>
        <strain>FGSC A4 / ATCC 38163 / CBS 112.46 / NRRL 194 / M139</strain>
    </source>
</reference>
<reference key="5">
    <citation type="journal article" date="2001" name="Chem. Biol.">
        <title>Identification of Claisen cyclase domain in fungal polyketide synthase WA, a naphthopyrone synthase of Aspergillus nidulans.</title>
        <authorList>
            <person name="Fujii I."/>
            <person name="Watanabe A."/>
            <person name="Sankawa U."/>
            <person name="Ebizuka Y."/>
        </authorList>
    </citation>
    <scope>FUNCTION</scope>
    <scope>CATALYTIC ACTIVITY</scope>
    <scope>DOMAIN</scope>
    <scope>ACTIVE SITE</scope>
    <scope>MUTAGENESIS OF SER-1682; SER-1804; SER-1967 AND HIS-2129</scope>
</reference>
<protein>
    <recommendedName>
        <fullName evidence="11">Conidial yellow pigment biosynthesis polyketide synthase</fullName>
        <shortName evidence="11">PKS</shortName>
        <ecNumber evidence="8">2.3.1.-</ecNumber>
    </recommendedName>
</protein>
<gene>
    <name evidence="11" type="primary">wA</name>
    <name type="ORF">AN8209</name>
</gene>
<accession>Q03149</accession>
<accession>C8V774</accession>
<accession>Q5AU21</accession>
<keyword id="KW-0183">Conidiation</keyword>
<keyword id="KW-0511">Multifunctional enzyme</keyword>
<keyword id="KW-0596">Phosphopantetheine</keyword>
<keyword id="KW-0597">Phosphoprotein</keyword>
<keyword id="KW-1185">Reference proteome</keyword>
<keyword id="KW-0677">Repeat</keyword>
<keyword id="KW-0749">Sporulation</keyword>
<keyword id="KW-0808">Transferase</keyword>
<comment type="function">
    <text evidence="8 9 10">Non-reducing polyketide synthase that condenses acetate units to form a heptaketide naphthopyrene YWA1, a yellow pigment found in mature asexual spores (conidia), via a polyketomethylene intermediate step.</text>
</comment>
<comment type="catalytic activity">
    <reaction evidence="8">
        <text>6 malonyl-CoA + acetyl-CoA + 6 H(+) = naphtopyrone YWA1 + 6 CO2 + 7 CoA + H2O</text>
        <dbReference type="Rhea" id="RHEA:62652"/>
        <dbReference type="ChEBI" id="CHEBI:15377"/>
        <dbReference type="ChEBI" id="CHEBI:15378"/>
        <dbReference type="ChEBI" id="CHEBI:16526"/>
        <dbReference type="ChEBI" id="CHEBI:57287"/>
        <dbReference type="ChEBI" id="CHEBI:57288"/>
        <dbReference type="ChEBI" id="CHEBI:57384"/>
        <dbReference type="ChEBI" id="CHEBI:133763"/>
    </reaction>
    <physiologicalReaction direction="left-to-right" evidence="8">
        <dbReference type="Rhea" id="RHEA:62653"/>
    </physiologicalReaction>
</comment>
<comment type="cofactor">
    <cofactor>
        <name>pantetheine 4'-phosphate</name>
        <dbReference type="ChEBI" id="CHEBI:47942"/>
    </cofactor>
    <text evidence="8">Binds 2 phosphopantetheines covalently.</text>
</comment>
<comment type="pathway">
    <text>Polyketide biosynthesis; heptaketide naphthopyrone YWA1 biosynthesis.</text>
</comment>
<comment type="domain">
    <text evidence="1">Multidomain protein; including a starter unit:ACP transacylase (SAT) that selects the starter unit; a ketosynthase (KS) that catalyzes repeated decarboxylative condensation to elongate the polyketide backbone; a malonyl-CoA:ACP transacylase (MAT) that selects and transfers the extender unit malonyl-CoA; a product template (PT) domain that controls the immediate cyclization regioselectivity of the reactive polyketide backbone; and 2 acyl-carrier protein (ACP) domains that serve as the tethers of the growing and completed polyketide via their phosphopantetheinyl arm.</text>
</comment>
<comment type="domain">
    <text evidence="8">The C-terminal region is involved in Claisen-type cyclization of the second ring of naphthopyrone.</text>
</comment>
<comment type="sequence caution" evidence="12">
    <conflict type="erroneous gene model prediction">
        <sequence resource="EMBL-CDS" id="EAA58778"/>
    </conflict>
</comment>
<name>WA_EMENI</name>
<evidence type="ECO:0000250" key="1">
    <source>
        <dbReference type="UniProtKB" id="Q5B0D0"/>
    </source>
</evidence>
<evidence type="ECO:0000255" key="2"/>
<evidence type="ECO:0000255" key="3">
    <source>
        <dbReference type="PROSITE-ProRule" id="PRU00258"/>
    </source>
</evidence>
<evidence type="ECO:0000255" key="4">
    <source>
        <dbReference type="PROSITE-ProRule" id="PRU01348"/>
    </source>
</evidence>
<evidence type="ECO:0000255" key="5">
    <source>
        <dbReference type="PROSITE-ProRule" id="PRU01363"/>
    </source>
</evidence>
<evidence type="ECO:0000255" key="6">
    <source>
        <dbReference type="PROSITE-ProRule" id="PRU10022"/>
    </source>
</evidence>
<evidence type="ECO:0000256" key="7">
    <source>
        <dbReference type="SAM" id="MobiDB-lite"/>
    </source>
</evidence>
<evidence type="ECO:0000269" key="8">
    <source>
    </source>
</evidence>
<evidence type="ECO:0000269" key="9">
    <source>
    </source>
</evidence>
<evidence type="ECO:0000269" key="10">
    <source ref="2"/>
</evidence>
<evidence type="ECO:0000303" key="11">
    <source>
    </source>
</evidence>
<evidence type="ECO:0000305" key="12"/>
<evidence type="ECO:0000305" key="13">
    <source>
    </source>
</evidence>
<organism>
    <name type="scientific">Emericella nidulans (strain FGSC A4 / ATCC 38163 / CBS 112.46 / NRRL 194 / M139)</name>
    <name type="common">Aspergillus nidulans</name>
    <dbReference type="NCBI Taxonomy" id="227321"/>
    <lineage>
        <taxon>Eukaryota</taxon>
        <taxon>Fungi</taxon>
        <taxon>Dikarya</taxon>
        <taxon>Ascomycota</taxon>
        <taxon>Pezizomycotina</taxon>
        <taxon>Eurotiomycetes</taxon>
        <taxon>Eurotiomycetidae</taxon>
        <taxon>Eurotiales</taxon>
        <taxon>Aspergillaceae</taxon>
        <taxon>Aspergillus</taxon>
        <taxon>Aspergillus subgen. Nidulantes</taxon>
    </lineage>
</organism>
<dbReference type="EC" id="2.3.1.-" evidence="8"/>
<dbReference type="EMBL" id="X65866">
    <property type="protein sequence ID" value="CAA46695.2"/>
    <property type="molecule type" value="Genomic_DNA"/>
</dbReference>
<dbReference type="EMBL" id="AACD01000143">
    <property type="protein sequence ID" value="EAA58778.1"/>
    <property type="status" value="ALT_SEQ"/>
    <property type="molecule type" value="Genomic_DNA"/>
</dbReference>
<dbReference type="EMBL" id="BN001302">
    <property type="protein sequence ID" value="CBF74114.1"/>
    <property type="molecule type" value="Genomic_DNA"/>
</dbReference>
<dbReference type="PIR" id="S28353">
    <property type="entry name" value="S28353"/>
</dbReference>
<dbReference type="RefSeq" id="XP_050467279.1">
    <property type="nucleotide sequence ID" value="XM_050611232.1"/>
</dbReference>
<dbReference type="RefSeq" id="XP_681478.1">
    <property type="nucleotide sequence ID" value="XM_676386.1"/>
</dbReference>
<dbReference type="SMR" id="Q03149"/>
<dbReference type="STRING" id="227321.Q03149"/>
<dbReference type="EnsemblFungi" id="CBF74114">
    <property type="protein sequence ID" value="CBF74114"/>
    <property type="gene ID" value="ANIA_08209"/>
</dbReference>
<dbReference type="GeneID" id="74896136"/>
<dbReference type="VEuPathDB" id="FungiDB:AN8209"/>
<dbReference type="eggNOG" id="KOG1202">
    <property type="taxonomic scope" value="Eukaryota"/>
</dbReference>
<dbReference type="HOGENOM" id="CLU_000022_16_2_1"/>
<dbReference type="InParanoid" id="Q03149"/>
<dbReference type="OMA" id="WKDSIWA"/>
<dbReference type="OrthoDB" id="329835at2759"/>
<dbReference type="BioCyc" id="MetaCyc:MONOMER-19453"/>
<dbReference type="UniPathway" id="UPA00167"/>
<dbReference type="Proteomes" id="UP000000560">
    <property type="component" value="Chromosome II"/>
</dbReference>
<dbReference type="GO" id="GO:0004315">
    <property type="term" value="F:3-oxoacyl-[acyl-carrier-protein] synthase activity"/>
    <property type="evidence" value="ECO:0007669"/>
    <property type="project" value="InterPro"/>
</dbReference>
<dbReference type="GO" id="GO:0052716">
    <property type="term" value="F:hydroquinone:oxygen oxidoreductase activity"/>
    <property type="evidence" value="ECO:0000315"/>
    <property type="project" value="AspGD"/>
</dbReference>
<dbReference type="GO" id="GO:0031177">
    <property type="term" value="F:phosphopantetheine binding"/>
    <property type="evidence" value="ECO:0007669"/>
    <property type="project" value="InterPro"/>
</dbReference>
<dbReference type="GO" id="GO:0048315">
    <property type="term" value="P:conidium formation"/>
    <property type="evidence" value="ECO:0007669"/>
    <property type="project" value="UniProtKB-KW"/>
</dbReference>
<dbReference type="GO" id="GO:0006633">
    <property type="term" value="P:fatty acid biosynthetic process"/>
    <property type="evidence" value="ECO:0007669"/>
    <property type="project" value="InterPro"/>
</dbReference>
<dbReference type="GO" id="GO:0046148">
    <property type="term" value="P:pigment biosynthetic process"/>
    <property type="evidence" value="ECO:0000315"/>
    <property type="project" value="AspGD"/>
</dbReference>
<dbReference type="GO" id="GO:0043324">
    <property type="term" value="P:pigment metabolic process involved in developmental pigmentation"/>
    <property type="evidence" value="ECO:0000315"/>
    <property type="project" value="AspGD"/>
</dbReference>
<dbReference type="GO" id="GO:0019748">
    <property type="term" value="P:secondary metabolic process"/>
    <property type="evidence" value="ECO:0000303"/>
    <property type="project" value="AspGD"/>
</dbReference>
<dbReference type="GO" id="GO:0030435">
    <property type="term" value="P:sporulation resulting in formation of a cellular spore"/>
    <property type="evidence" value="ECO:0007669"/>
    <property type="project" value="UniProtKB-KW"/>
</dbReference>
<dbReference type="CDD" id="cd00833">
    <property type="entry name" value="PKS"/>
    <property type="match status" value="1"/>
</dbReference>
<dbReference type="FunFam" id="3.40.366.10:FF:000011">
    <property type="entry name" value="Polyketide synthetase PksP"/>
    <property type="match status" value="1"/>
</dbReference>
<dbReference type="FunFam" id="3.40.366.10:FF:000002">
    <property type="entry name" value="Probable polyketide synthase 2"/>
    <property type="match status" value="1"/>
</dbReference>
<dbReference type="FunFam" id="1.10.1200.10:FF:000011">
    <property type="entry name" value="Sterigmatocystin biosynthesis polyketide synthase"/>
    <property type="match status" value="2"/>
</dbReference>
<dbReference type="FunFam" id="3.10.129.110:FF:000001">
    <property type="entry name" value="Sterigmatocystin biosynthesis polyketide synthase"/>
    <property type="match status" value="1"/>
</dbReference>
<dbReference type="FunFam" id="3.40.47.10:FF:000031">
    <property type="entry name" value="Sterigmatocystin biosynthesis polyketide synthase"/>
    <property type="match status" value="1"/>
</dbReference>
<dbReference type="FunFam" id="3.40.50.1820:FF:000116">
    <property type="entry name" value="Sterigmatocystin biosynthesis polyketide synthase"/>
    <property type="match status" value="1"/>
</dbReference>
<dbReference type="Gene3D" id="3.30.70.3290">
    <property type="match status" value="1"/>
</dbReference>
<dbReference type="Gene3D" id="3.40.47.10">
    <property type="match status" value="1"/>
</dbReference>
<dbReference type="Gene3D" id="1.10.1200.10">
    <property type="entry name" value="ACP-like"/>
    <property type="match status" value="2"/>
</dbReference>
<dbReference type="Gene3D" id="3.40.50.1820">
    <property type="entry name" value="alpha/beta hydrolase"/>
    <property type="match status" value="1"/>
</dbReference>
<dbReference type="Gene3D" id="3.40.366.10">
    <property type="entry name" value="Malonyl-Coenzyme A Acyl Carrier Protein, domain 2"/>
    <property type="match status" value="2"/>
</dbReference>
<dbReference type="Gene3D" id="3.10.129.110">
    <property type="entry name" value="Polyketide synthase dehydratase"/>
    <property type="match status" value="1"/>
</dbReference>
<dbReference type="InterPro" id="IPR029058">
    <property type="entry name" value="AB_hydrolase_fold"/>
</dbReference>
<dbReference type="InterPro" id="IPR001227">
    <property type="entry name" value="Ac_transferase_dom_sf"/>
</dbReference>
<dbReference type="InterPro" id="IPR036736">
    <property type="entry name" value="ACP-like_sf"/>
</dbReference>
<dbReference type="InterPro" id="IPR014043">
    <property type="entry name" value="Acyl_transferase_dom"/>
</dbReference>
<dbReference type="InterPro" id="IPR016035">
    <property type="entry name" value="Acyl_Trfase/lysoPLipase"/>
</dbReference>
<dbReference type="InterPro" id="IPR018201">
    <property type="entry name" value="Ketoacyl_synth_AS"/>
</dbReference>
<dbReference type="InterPro" id="IPR014031">
    <property type="entry name" value="Ketoacyl_synth_C"/>
</dbReference>
<dbReference type="InterPro" id="IPR014030">
    <property type="entry name" value="Ketoacyl_synth_N"/>
</dbReference>
<dbReference type="InterPro" id="IPR016036">
    <property type="entry name" value="Malonyl_transacylase_ACP-bd"/>
</dbReference>
<dbReference type="InterPro" id="IPR020841">
    <property type="entry name" value="PKS_Beta-ketoAc_synthase_dom"/>
</dbReference>
<dbReference type="InterPro" id="IPR042104">
    <property type="entry name" value="PKS_dehydratase_sf"/>
</dbReference>
<dbReference type="InterPro" id="IPR049900">
    <property type="entry name" value="PKS_mFAS_DH"/>
</dbReference>
<dbReference type="InterPro" id="IPR050091">
    <property type="entry name" value="PKS_NRPS_Biosynth_Enz"/>
</dbReference>
<dbReference type="InterPro" id="IPR020806">
    <property type="entry name" value="PKS_PP-bd"/>
</dbReference>
<dbReference type="InterPro" id="IPR009081">
    <property type="entry name" value="PP-bd_ACP"/>
</dbReference>
<dbReference type="InterPro" id="IPR006162">
    <property type="entry name" value="Ppantetheine_attach_site"/>
</dbReference>
<dbReference type="InterPro" id="IPR030918">
    <property type="entry name" value="PT_fungal_PKS"/>
</dbReference>
<dbReference type="InterPro" id="IPR032088">
    <property type="entry name" value="SAT"/>
</dbReference>
<dbReference type="InterPro" id="IPR001031">
    <property type="entry name" value="Thioesterase"/>
</dbReference>
<dbReference type="InterPro" id="IPR016039">
    <property type="entry name" value="Thiolase-like"/>
</dbReference>
<dbReference type="NCBIfam" id="TIGR04532">
    <property type="entry name" value="PT_fungal_PKS"/>
    <property type="match status" value="1"/>
</dbReference>
<dbReference type="PANTHER" id="PTHR43775">
    <property type="entry name" value="FATTY ACID SYNTHASE"/>
    <property type="match status" value="1"/>
</dbReference>
<dbReference type="PANTHER" id="PTHR43775:SF37">
    <property type="entry name" value="SI:DKEY-61P9.11"/>
    <property type="match status" value="1"/>
</dbReference>
<dbReference type="Pfam" id="PF00698">
    <property type="entry name" value="Acyl_transf_1"/>
    <property type="match status" value="1"/>
</dbReference>
<dbReference type="Pfam" id="PF22621">
    <property type="entry name" value="CurL-like_PKS_C"/>
    <property type="match status" value="1"/>
</dbReference>
<dbReference type="Pfam" id="PF00109">
    <property type="entry name" value="ketoacyl-synt"/>
    <property type="match status" value="1"/>
</dbReference>
<dbReference type="Pfam" id="PF02801">
    <property type="entry name" value="Ketoacyl-synt_C"/>
    <property type="match status" value="1"/>
</dbReference>
<dbReference type="Pfam" id="PF00550">
    <property type="entry name" value="PP-binding"/>
    <property type="match status" value="2"/>
</dbReference>
<dbReference type="Pfam" id="PF16073">
    <property type="entry name" value="SAT"/>
    <property type="match status" value="1"/>
</dbReference>
<dbReference type="Pfam" id="PF00975">
    <property type="entry name" value="Thioesterase"/>
    <property type="match status" value="1"/>
</dbReference>
<dbReference type="SMART" id="SM00827">
    <property type="entry name" value="PKS_AT"/>
    <property type="match status" value="1"/>
</dbReference>
<dbReference type="SMART" id="SM00825">
    <property type="entry name" value="PKS_KS"/>
    <property type="match status" value="1"/>
</dbReference>
<dbReference type="SMART" id="SM00823">
    <property type="entry name" value="PKS_PP"/>
    <property type="match status" value="2"/>
</dbReference>
<dbReference type="SUPFAM" id="SSF47336">
    <property type="entry name" value="ACP-like"/>
    <property type="match status" value="2"/>
</dbReference>
<dbReference type="SUPFAM" id="SSF53474">
    <property type="entry name" value="alpha/beta-Hydrolases"/>
    <property type="match status" value="1"/>
</dbReference>
<dbReference type="SUPFAM" id="SSF52151">
    <property type="entry name" value="FabD/lysophospholipase-like"/>
    <property type="match status" value="1"/>
</dbReference>
<dbReference type="SUPFAM" id="SSF55048">
    <property type="entry name" value="Probable ACP-binding domain of malonyl-CoA ACP transacylase"/>
    <property type="match status" value="1"/>
</dbReference>
<dbReference type="SUPFAM" id="SSF53901">
    <property type="entry name" value="Thiolase-like"/>
    <property type="match status" value="1"/>
</dbReference>
<dbReference type="PROSITE" id="PS50075">
    <property type="entry name" value="CARRIER"/>
    <property type="match status" value="2"/>
</dbReference>
<dbReference type="PROSITE" id="PS00606">
    <property type="entry name" value="KS3_1"/>
    <property type="match status" value="1"/>
</dbReference>
<dbReference type="PROSITE" id="PS52004">
    <property type="entry name" value="KS3_2"/>
    <property type="match status" value="1"/>
</dbReference>
<dbReference type="PROSITE" id="PS00012">
    <property type="entry name" value="PHOSPHOPANTETHEINE"/>
    <property type="match status" value="1"/>
</dbReference>
<dbReference type="PROSITE" id="PS52019">
    <property type="entry name" value="PKS_MFAS_DH"/>
    <property type="match status" value="1"/>
</dbReference>